<accession>Q2QLV9</accession>
<accession>Q8W014</accession>
<gene>
    <name evidence="6" type="primary">PSY2</name>
    <name evidence="10" type="ordered locus">Os12g0626400</name>
    <name evidence="9" type="ordered locus">LOC_Os12g43130</name>
</gene>
<organism>
    <name type="scientific">Oryza sativa subsp. japonica</name>
    <name type="common">Rice</name>
    <dbReference type="NCBI Taxonomy" id="39947"/>
    <lineage>
        <taxon>Eukaryota</taxon>
        <taxon>Viridiplantae</taxon>
        <taxon>Streptophyta</taxon>
        <taxon>Embryophyta</taxon>
        <taxon>Tracheophyta</taxon>
        <taxon>Spermatophyta</taxon>
        <taxon>Magnoliopsida</taxon>
        <taxon>Liliopsida</taxon>
        <taxon>Poales</taxon>
        <taxon>Poaceae</taxon>
        <taxon>BOP clade</taxon>
        <taxon>Oryzoideae</taxon>
        <taxon>Oryzeae</taxon>
        <taxon>Oryzinae</taxon>
        <taxon>Oryza</taxon>
        <taxon>Oryza sativa</taxon>
    </lineage>
</organism>
<sequence length="398" mass="44729">MASSSSAAALWTAAPHPHGSCIRIHAIFHQRHQRRGRRPVVVASSVRPLQAASLAVATAPVAVASRRTAAEEAVYEVVLRQAALVEEATHRRGAGAPRWAEEDAVDWGLLLGDAYHRCGEVCAEYAKTFYLGTQLMTPERRKAVWAIYVWCRRTDELVDGPNSSYITPKALDRWEKRLEDLFEGRPYDMYDAALSDTVSKFPVDIQPFKDMIEGMRLDLWKSRYRSFDELYLYCYYVAGTVGLMTVPVMGIAPDSKASTESVYNAALALGIANQLTNILRDVGEDSRRGRIYLPLDELAEAGLTEEDIFRGKVTDKWRKFMKGQILRARLFFDEAEKGVAHLDSASRWPVLASLWLYRQILDAIEANDYNNFTKRAYVNKAKKLLSLPVAYARAAVAS</sequence>
<name>PSY2_ORYSJ</name>
<proteinExistence type="evidence at protein level"/>
<dbReference type="EC" id="2.5.1.32" evidence="2"/>
<dbReference type="EMBL" id="AY024351">
    <property type="protein sequence ID" value="AAK07735.1"/>
    <property type="status" value="ALT_SEQ"/>
    <property type="molecule type" value="Genomic_DNA"/>
</dbReference>
<dbReference type="EMBL" id="DP000011">
    <property type="protein sequence ID" value="ABA99494.1"/>
    <property type="molecule type" value="Genomic_DNA"/>
</dbReference>
<dbReference type="EMBL" id="AP014968">
    <property type="protein sequence ID" value="BAT18187.1"/>
    <property type="molecule type" value="Genomic_DNA"/>
</dbReference>
<dbReference type="EMBL" id="AK073290">
    <property type="protein sequence ID" value="BAG93381.1"/>
    <property type="molecule type" value="mRNA"/>
</dbReference>
<dbReference type="RefSeq" id="XP_015618170.1">
    <property type="nucleotide sequence ID" value="XM_015762684.1"/>
</dbReference>
<dbReference type="SMR" id="Q2QLV9"/>
<dbReference type="FunCoup" id="Q2QLV9">
    <property type="interactions" value="25"/>
</dbReference>
<dbReference type="STRING" id="39947.Q2QLV9"/>
<dbReference type="PaxDb" id="39947-Q2QLV9"/>
<dbReference type="EnsemblPlants" id="Os12t0626400-02">
    <property type="protein sequence ID" value="Os12t0626400-02"/>
    <property type="gene ID" value="Os12g0626400"/>
</dbReference>
<dbReference type="Gramene" id="Os12t0626400-02">
    <property type="protein sequence ID" value="Os12t0626400-02"/>
    <property type="gene ID" value="Os12g0626400"/>
</dbReference>
<dbReference type="eggNOG" id="KOG1459">
    <property type="taxonomic scope" value="Eukaryota"/>
</dbReference>
<dbReference type="HOGENOM" id="CLU_037269_2_0_1"/>
<dbReference type="InParanoid" id="Q2QLV9"/>
<dbReference type="OMA" id="LMTPQRQ"/>
<dbReference type="OrthoDB" id="6600518at2759"/>
<dbReference type="Proteomes" id="UP000059680">
    <property type="component" value="Chromosome 12"/>
</dbReference>
<dbReference type="ExpressionAtlas" id="Q2QLV9">
    <property type="expression patterns" value="baseline and differential"/>
</dbReference>
<dbReference type="GO" id="GO:0031969">
    <property type="term" value="C:chloroplast membrane"/>
    <property type="evidence" value="ECO:0007669"/>
    <property type="project" value="UniProtKB-SubCell"/>
</dbReference>
<dbReference type="GO" id="GO:0010287">
    <property type="term" value="C:plastoglobule"/>
    <property type="evidence" value="ECO:0000314"/>
    <property type="project" value="UniProtKB"/>
</dbReference>
<dbReference type="GO" id="GO:0046905">
    <property type="term" value="F:15-cis-phytoene synthase activity"/>
    <property type="evidence" value="ECO:0000314"/>
    <property type="project" value="UniProtKB"/>
</dbReference>
<dbReference type="GO" id="GO:0004311">
    <property type="term" value="F:geranylgeranyl diphosphate synthase activity"/>
    <property type="evidence" value="ECO:0007669"/>
    <property type="project" value="InterPro"/>
</dbReference>
<dbReference type="GO" id="GO:0051996">
    <property type="term" value="F:squalene synthase [NAD(P)H] activity"/>
    <property type="evidence" value="ECO:0007669"/>
    <property type="project" value="InterPro"/>
</dbReference>
<dbReference type="GO" id="GO:0016117">
    <property type="term" value="P:carotenoid biosynthetic process"/>
    <property type="evidence" value="ECO:0000314"/>
    <property type="project" value="UniProtKB"/>
</dbReference>
<dbReference type="CDD" id="cd00683">
    <property type="entry name" value="Trans_IPPS_HH"/>
    <property type="match status" value="1"/>
</dbReference>
<dbReference type="FunFam" id="1.10.600.10:FF:000004">
    <property type="entry name" value="Phytoene synthase chloroplastic"/>
    <property type="match status" value="1"/>
</dbReference>
<dbReference type="Gene3D" id="1.10.600.10">
    <property type="entry name" value="Farnesyl Diphosphate Synthase"/>
    <property type="match status" value="1"/>
</dbReference>
<dbReference type="InterPro" id="IPR008949">
    <property type="entry name" value="Isoprenoid_synthase_dom_sf"/>
</dbReference>
<dbReference type="InterPro" id="IPR002060">
    <property type="entry name" value="Squ/phyt_synthse"/>
</dbReference>
<dbReference type="InterPro" id="IPR019845">
    <property type="entry name" value="Squalene/phytoene_synthase_CS"/>
</dbReference>
<dbReference type="InterPro" id="IPR044843">
    <property type="entry name" value="Trans_IPPS_bact-type"/>
</dbReference>
<dbReference type="InterPro" id="IPR033904">
    <property type="entry name" value="Trans_IPPS_HH"/>
</dbReference>
<dbReference type="PANTHER" id="PTHR31480">
    <property type="entry name" value="BIFUNCTIONAL LYCOPENE CYCLASE/PHYTOENE SYNTHASE"/>
    <property type="match status" value="1"/>
</dbReference>
<dbReference type="Pfam" id="PF00494">
    <property type="entry name" value="SQS_PSY"/>
    <property type="match status" value="1"/>
</dbReference>
<dbReference type="SFLD" id="SFLDG01212">
    <property type="entry name" value="Phytoene_synthase_like"/>
    <property type="match status" value="1"/>
</dbReference>
<dbReference type="SFLD" id="SFLDG01018">
    <property type="entry name" value="Squalene/Phytoene_Synthase_Lik"/>
    <property type="match status" value="1"/>
</dbReference>
<dbReference type="SUPFAM" id="SSF48576">
    <property type="entry name" value="Terpenoid synthases"/>
    <property type="match status" value="1"/>
</dbReference>
<dbReference type="PROSITE" id="PS01045">
    <property type="entry name" value="SQUALEN_PHYTOEN_SYN_2"/>
    <property type="match status" value="1"/>
</dbReference>
<reference key="1">
    <citation type="journal article" date="2004" name="Plant Physiol.">
        <title>Gene duplication in the carotenoid biosynthetic pathway preceded evolution of the grasses.</title>
        <authorList>
            <person name="Gallagher C.E."/>
            <person name="Matthews P.D."/>
            <person name="Li F."/>
            <person name="Wurtzel E.T."/>
        </authorList>
    </citation>
    <scope>NUCLEOTIDE SEQUENCE [GENOMIC DNA]</scope>
    <scope>FUNCTION</scope>
    <scope>CATALYTIC ACTIVITY</scope>
    <scope>TISSUE SPECIFICITY</scope>
</reference>
<reference key="2">
    <citation type="journal article" date="2005" name="BMC Biol.">
        <title>The sequence of rice chromosomes 11 and 12, rich in disease resistance genes and recent gene duplications.</title>
        <authorList>
            <consortium name="The rice chromosomes 11 and 12 sequencing consortia"/>
        </authorList>
    </citation>
    <scope>NUCLEOTIDE SEQUENCE [LARGE SCALE GENOMIC DNA]</scope>
    <source>
        <strain>cv. Nipponbare</strain>
    </source>
</reference>
<reference key="3">
    <citation type="journal article" date="2005" name="Nature">
        <title>The map-based sequence of the rice genome.</title>
        <authorList>
            <consortium name="International rice genome sequencing project (IRGSP)"/>
        </authorList>
    </citation>
    <scope>NUCLEOTIDE SEQUENCE [LARGE SCALE GENOMIC DNA]</scope>
    <source>
        <strain>cv. Nipponbare</strain>
    </source>
</reference>
<reference key="4">
    <citation type="journal article" date="2008" name="Nucleic Acids Res.">
        <title>The rice annotation project database (RAP-DB): 2008 update.</title>
        <authorList>
            <consortium name="The rice annotation project (RAP)"/>
        </authorList>
    </citation>
    <scope>GENOME REANNOTATION</scope>
    <source>
        <strain>cv. Nipponbare</strain>
    </source>
</reference>
<reference key="5">
    <citation type="journal article" date="2013" name="Rice">
        <title>Improvement of the Oryza sativa Nipponbare reference genome using next generation sequence and optical map data.</title>
        <authorList>
            <person name="Kawahara Y."/>
            <person name="de la Bastide M."/>
            <person name="Hamilton J.P."/>
            <person name="Kanamori H."/>
            <person name="McCombie W.R."/>
            <person name="Ouyang S."/>
            <person name="Schwartz D.C."/>
            <person name="Tanaka T."/>
            <person name="Wu J."/>
            <person name="Zhou S."/>
            <person name="Childs K.L."/>
            <person name="Davidson R.M."/>
            <person name="Lin H."/>
            <person name="Quesada-Ocampo L."/>
            <person name="Vaillancourt B."/>
            <person name="Sakai H."/>
            <person name="Lee S.S."/>
            <person name="Kim J."/>
            <person name="Numa H."/>
            <person name="Itoh T."/>
            <person name="Buell C.R."/>
            <person name="Matsumoto T."/>
        </authorList>
    </citation>
    <scope>GENOME REANNOTATION</scope>
    <source>
        <strain>cv. Nipponbare</strain>
    </source>
</reference>
<reference key="6">
    <citation type="journal article" date="2003" name="Science">
        <title>Collection, mapping, and annotation of over 28,000 cDNA clones from japonica rice.</title>
        <authorList>
            <consortium name="The rice full-length cDNA consortium"/>
        </authorList>
    </citation>
    <scope>NUCLEOTIDE SEQUENCE [LARGE SCALE MRNA]</scope>
    <source>
        <strain>cv. Nipponbare</strain>
    </source>
</reference>
<reference key="7">
    <citation type="journal article" date="2008" name="Plant Physiol.">
        <title>A third phytoene synthase is devoted to abiotic stress-induced abscisic acid formation in rice and defines functional diversification of phytoene synthase genes.</title>
        <authorList>
            <person name="Welsch R."/>
            <person name="Wuest F."/>
            <person name="Baer C."/>
            <person name="Al-Babili S."/>
            <person name="Beyer P."/>
        </authorList>
    </citation>
    <scope>SUBCELLULAR LOCATION</scope>
    <scope>TISSUE SPECIFICITY</scope>
    <scope>INDUCTION</scope>
</reference>
<reference key="8">
    <citation type="journal article" date="2012" name="Plant Cell">
        <title>Plastid localization of the key carotenoid enzyme phytoene synthase is altered by isozyme, allelic variation, and activity.</title>
        <authorList>
            <person name="Shumskaya M."/>
            <person name="Bradbury L.M."/>
            <person name="Monaco R.R."/>
            <person name="Wurtzel E.T."/>
        </authorList>
    </citation>
    <scope>SUBCELLULAR LOCATION</scope>
</reference>
<reference key="9">
    <citation type="journal article" date="2016" name="Int. J. Mol. Sci.">
        <title>Plastoglobule-Targeting Competence of a Putative Transit Peptide Sequence from Rice Phytoene Synthase 2 in Plastids.</title>
        <authorList>
            <person name="You M.K."/>
            <person name="Kim J.H."/>
            <person name="Lee Y.J."/>
            <person name="Jeong Y.S."/>
            <person name="Ha S.H."/>
        </authorList>
    </citation>
    <scope>SUBCELLULAR LOCATION</scope>
</reference>
<comment type="function">
    <text evidence="2">Catalyzes the conversion of geranylgeranyl diphosphate to phytoene. Mediates the first committed step in carotenoid biosynthesis.</text>
</comment>
<comment type="catalytic activity">
    <reaction evidence="2">
        <text>2 (2E,6E,10E)-geranylgeranyl diphosphate = 15-cis-phytoene + 2 diphosphate</text>
        <dbReference type="Rhea" id="RHEA:34475"/>
        <dbReference type="ChEBI" id="CHEBI:27787"/>
        <dbReference type="ChEBI" id="CHEBI:33019"/>
        <dbReference type="ChEBI" id="CHEBI:58756"/>
        <dbReference type="EC" id="2.5.1.32"/>
    </reaction>
</comment>
<comment type="subcellular location">
    <subcellularLocation>
        <location evidence="3">Plastid</location>
        <location evidence="3">Chloroplast membrane</location>
        <topology evidence="8">Peripheral membrane protein</topology>
    </subcellularLocation>
    <subcellularLocation>
        <location evidence="4 5">Plastid</location>
        <location evidence="4 5">Chloroplast</location>
        <location evidence="4 5">Plastoglobule</location>
    </subcellularLocation>
</comment>
<comment type="tissue specificity">
    <text evidence="2 3">Expressed in leaves and endosperm (PubMed:15247400). Expressed in developing leaves (PubMed:18326788).</text>
</comment>
<comment type="induction">
    <text evidence="2">Induced by salt stress and abscisic acid (ABA) in roots.</text>
</comment>
<comment type="similarity">
    <text evidence="8">Belongs to the phytoene/squalene synthase family.</text>
</comment>
<comment type="sequence caution" evidence="8">
    <conflict type="erroneous gene model prediction">
        <sequence resource="EMBL-CDS" id="AAK07735"/>
    </conflict>
</comment>
<feature type="transit peptide" description="Chloroplast" evidence="1">
    <location>
        <begin position="1"/>
        <end position="80"/>
    </location>
</feature>
<feature type="chain" id="PRO_0000444953" description="Phytoene synthase 2, chloroplastic">
    <location>
        <begin position="81"/>
        <end position="398"/>
    </location>
</feature>
<keyword id="KW-0125">Carotenoid biosynthesis</keyword>
<keyword id="KW-0150">Chloroplast</keyword>
<keyword id="KW-0414">Isoprene biosynthesis</keyword>
<keyword id="KW-0472">Membrane</keyword>
<keyword id="KW-0934">Plastid</keyword>
<keyword id="KW-1185">Reference proteome</keyword>
<keyword id="KW-0808">Transferase</keyword>
<keyword id="KW-0809">Transit peptide</keyword>
<protein>
    <recommendedName>
        <fullName evidence="6">Phytoene synthase 2, chloroplastic</fullName>
        <shortName evidence="7">OsPSY2</shortName>
        <ecNumber evidence="2">2.5.1.32</ecNumber>
    </recommendedName>
</protein>
<evidence type="ECO:0000255" key="1"/>
<evidence type="ECO:0000269" key="2">
    <source>
    </source>
</evidence>
<evidence type="ECO:0000269" key="3">
    <source>
    </source>
</evidence>
<evidence type="ECO:0000269" key="4">
    <source>
    </source>
</evidence>
<evidence type="ECO:0000269" key="5">
    <source>
    </source>
</evidence>
<evidence type="ECO:0000303" key="6">
    <source>
    </source>
</evidence>
<evidence type="ECO:0000303" key="7">
    <source>
    </source>
</evidence>
<evidence type="ECO:0000305" key="8"/>
<evidence type="ECO:0000312" key="9">
    <source>
        <dbReference type="EMBL" id="ABA99494.1"/>
    </source>
</evidence>
<evidence type="ECO:0000312" key="10">
    <source>
        <dbReference type="EMBL" id="BAT18187.1"/>
    </source>
</evidence>